<accession>Q9NBL2</accession>
<name>MSL3_DROVI</name>
<dbReference type="EMBL" id="AF247726">
    <property type="protein sequence ID" value="AAF88149.1"/>
    <property type="molecule type" value="Genomic_DNA"/>
</dbReference>
<dbReference type="SMR" id="Q9NBL2"/>
<dbReference type="OrthoDB" id="10044771at2759"/>
<dbReference type="GO" id="GO:0072487">
    <property type="term" value="C:MSL complex"/>
    <property type="evidence" value="ECO:0007669"/>
    <property type="project" value="TreeGrafter"/>
</dbReference>
<dbReference type="GO" id="GO:0035267">
    <property type="term" value="C:NuA4 histone acetyltransferase complex"/>
    <property type="evidence" value="ECO:0007669"/>
    <property type="project" value="TreeGrafter"/>
</dbReference>
<dbReference type="GO" id="GO:0005634">
    <property type="term" value="C:nucleus"/>
    <property type="evidence" value="ECO:0007669"/>
    <property type="project" value="UniProtKB-SubCell"/>
</dbReference>
<dbReference type="GO" id="GO:0000805">
    <property type="term" value="C:X chromosome"/>
    <property type="evidence" value="ECO:0000250"/>
    <property type="project" value="UniProtKB"/>
</dbReference>
<dbReference type="GO" id="GO:0003682">
    <property type="term" value="F:chromatin binding"/>
    <property type="evidence" value="ECO:0000250"/>
    <property type="project" value="UniProtKB"/>
</dbReference>
<dbReference type="GO" id="GO:0030154">
    <property type="term" value="P:cell differentiation"/>
    <property type="evidence" value="ECO:0007669"/>
    <property type="project" value="UniProtKB-KW"/>
</dbReference>
<dbReference type="GO" id="GO:0006355">
    <property type="term" value="P:regulation of DNA-templated transcription"/>
    <property type="evidence" value="ECO:0007669"/>
    <property type="project" value="InterPro"/>
</dbReference>
<dbReference type="GO" id="GO:0007549">
    <property type="term" value="P:sex-chromosome dosage compensation"/>
    <property type="evidence" value="ECO:0000250"/>
    <property type="project" value="UniProtKB"/>
</dbReference>
<dbReference type="FunFam" id="2.30.30.140:FF:000042">
    <property type="entry name" value="male-specific lethal 3 homolog"/>
    <property type="match status" value="1"/>
</dbReference>
<dbReference type="Gene3D" id="2.30.30.140">
    <property type="match status" value="1"/>
</dbReference>
<dbReference type="Gene3D" id="1.10.274.30">
    <property type="entry name" value="MRG domain"/>
    <property type="match status" value="1"/>
</dbReference>
<dbReference type="InterPro" id="IPR016197">
    <property type="entry name" value="Chromo-like_dom_sf"/>
</dbReference>
<dbReference type="InterPro" id="IPR008676">
    <property type="entry name" value="MRG"/>
</dbReference>
<dbReference type="InterPro" id="IPR038217">
    <property type="entry name" value="MRG_C_sf"/>
</dbReference>
<dbReference type="InterPro" id="IPR026541">
    <property type="entry name" value="MRG_dom"/>
</dbReference>
<dbReference type="InterPro" id="IPR053820">
    <property type="entry name" value="MSL3_chromo-like"/>
</dbReference>
<dbReference type="PANTHER" id="PTHR10880">
    <property type="entry name" value="MORTALITY FACTOR 4-LIKE PROTEIN"/>
    <property type="match status" value="1"/>
</dbReference>
<dbReference type="PANTHER" id="PTHR10880:SF15">
    <property type="entry name" value="MSL COMPLEX SUBUNIT 3"/>
    <property type="match status" value="1"/>
</dbReference>
<dbReference type="Pfam" id="PF05712">
    <property type="entry name" value="MRG"/>
    <property type="match status" value="1"/>
</dbReference>
<dbReference type="Pfam" id="PF22732">
    <property type="entry name" value="MSL3_chromo-like"/>
    <property type="match status" value="1"/>
</dbReference>
<dbReference type="SUPFAM" id="SSF54160">
    <property type="entry name" value="Chromo domain-like"/>
    <property type="match status" value="1"/>
</dbReference>
<dbReference type="PROSITE" id="PS51640">
    <property type="entry name" value="MRG"/>
    <property type="match status" value="1"/>
</dbReference>
<organism>
    <name type="scientific">Drosophila virilis</name>
    <name type="common">Fruit fly</name>
    <dbReference type="NCBI Taxonomy" id="7244"/>
    <lineage>
        <taxon>Eukaryota</taxon>
        <taxon>Metazoa</taxon>
        <taxon>Ecdysozoa</taxon>
        <taxon>Arthropoda</taxon>
        <taxon>Hexapoda</taxon>
        <taxon>Insecta</taxon>
        <taxon>Pterygota</taxon>
        <taxon>Neoptera</taxon>
        <taxon>Endopterygota</taxon>
        <taxon>Diptera</taxon>
        <taxon>Brachycera</taxon>
        <taxon>Muscomorpha</taxon>
        <taxon>Ephydroidea</taxon>
        <taxon>Drosophilidae</taxon>
        <taxon>Drosophila</taxon>
    </lineage>
</organism>
<proteinExistence type="inferred from homology"/>
<evidence type="ECO:0000250" key="1">
    <source>
        <dbReference type="UniProtKB" id="P50536"/>
    </source>
</evidence>
<evidence type="ECO:0000255" key="2">
    <source>
        <dbReference type="PROSITE-ProRule" id="PRU00972"/>
    </source>
</evidence>
<evidence type="ECO:0000256" key="3">
    <source>
        <dbReference type="SAM" id="MobiDB-lite"/>
    </source>
</evidence>
<gene>
    <name type="primary">msl-3</name>
</gene>
<reference key="1">
    <citation type="journal article" date="2000" name="Mol. Biol. Evol.">
        <title>Origin and evolution of the regulatory gene male-specific lethal-3.</title>
        <authorList>
            <person name="Marin I."/>
            <person name="Baker B.S."/>
        </authorList>
    </citation>
    <scope>NUCLEOTIDE SEQUENCE [GENOMIC DNA]</scope>
</reference>
<keyword id="KW-0156">Chromatin regulator</keyword>
<keyword id="KW-0158">Chromosome</keyword>
<keyword id="KW-0217">Developmental protein</keyword>
<keyword id="KW-0221">Differentiation</keyword>
<keyword id="KW-0539">Nucleus</keyword>
<keyword id="KW-0804">Transcription</keyword>
<keyword id="KW-0805">Transcription regulation</keyword>
<keyword id="KW-0832">Ubl conjugation</keyword>
<protein>
    <recommendedName>
        <fullName>Protein male-specific lethal-3</fullName>
    </recommendedName>
</protein>
<sequence length="543" mass="62126">MTAHENEVQLFNRGEKVLCYEPDESKARVLYDSKVLAVYERKDAANLRYFDYKIHFQGWNSSWDRNVRAASLLKDNEENRKLQRELAEAAQLQKTGGYSYKDSKTPTLPSSKKKRLARGGHVEDPTADPLDISLPSSKKKRLARGGHVEDPTADPLDISLAHLPATPKPELPAQQKRGARSRDGSGNRSRDGSGNRSRDNSSGRKKQRDKSKGGDKNDDGERRSARSQFSLHVSPKDTHTTDAEKRIHQEDRVMLRISERLREYMEYDYNMVCKLEKQHALPARTPIVTILENFVKQRAVELAIGIKQDSSRARNTLSRNARMEREYDRVMSIVCMLKEVVDGLRIYFEFHLEDHLLYREEKDYALGFLTDNNMKNCSLLLNKSYEFINPSGDNELISMAGNVNGTNGVDGPLLGDIEYENQLQKCLRYIEKNSAKNNIALAYTAAYKLPMEMRGFLRETFSWSLLSEESPPEKSIIFGAPHLARMLVLLPECLNASPISNEKLVDLLPHLDSFINYLENHKEWFDKQNYLDPLIDQGRELSV</sequence>
<feature type="chain" id="PRO_0000080246" description="Protein male-specific lethal-3">
    <location>
        <begin position="1"/>
        <end position="543"/>
    </location>
</feature>
<feature type="domain" description="Chromo">
    <location>
        <begin position="10"/>
        <end position="90"/>
    </location>
</feature>
<feature type="domain" description="MRG" evidence="2">
    <location>
        <begin position="249"/>
        <end position="542"/>
    </location>
</feature>
<feature type="region of interest" description="Disordered" evidence="3">
    <location>
        <begin position="93"/>
        <end position="247"/>
    </location>
</feature>
<feature type="compositionally biased region" description="Basic and acidic residues" evidence="3">
    <location>
        <begin position="180"/>
        <end position="202"/>
    </location>
</feature>
<feature type="compositionally biased region" description="Basic and acidic residues" evidence="3">
    <location>
        <begin position="210"/>
        <end position="224"/>
    </location>
</feature>
<feature type="compositionally biased region" description="Basic and acidic residues" evidence="3">
    <location>
        <begin position="234"/>
        <end position="247"/>
    </location>
</feature>
<comment type="function">
    <text evidence="1">Component of the male-specific lethal (MSL) histone acetyltransferase complex, a multiprotein complex essential for elevating transcription of the single X chromosome in the male (X chromosome dosage compensation). The MSL complex specifically associates with the single X chromosome in males and mediates formation of H4K16ac, promoting a two-fold activation of X chromosome. Acts as a histone reader that specifically recognizes and binds histone H3 trimethylated at 'Lys-36' (H3K36me3) and histone H4 monomethylated at 'Lys-20' (H4K20me1). Within the MSL complex, mediates the spreading of the MSL complex from initiation sites on the male X chromosome to flanking chromatin. Following initial recruitment of the MSL complex to male X chromosome by msl-2, msl-3 binds H3K36me3 and promotes spreading of the MSL complex in cis. In addition to its role in dosage compensation in males, promotes germline stem cell differentiation in females: recognizes and binds H3K36me3, promoting recruitment of the ATAC complex and transcription of genes, such as RpS19b.</text>
</comment>
<comment type="subunit">
    <text evidence="1">Component of the male-specific lethal (MSL) histone acetyltransferase complex, composed of mof, mle, msl-1, msl-2 and msl-3 proteins, as well as roX1 and roX2 non-coding RNAs.</text>
</comment>
<comment type="subcellular location">
    <subcellularLocation>
        <location evidence="1 2">Nucleus</location>
    </subcellularLocation>
    <subcellularLocation>
        <location evidence="1">Chromosome</location>
    </subcellularLocation>
    <text evidence="1">Msl-3 is associated with hundreds of discrete sites along the length of the X chromosome in males and not in females, and is also associated with 10-20 autosomal sites in males. Recruited to the male X chromosome following association with roX1 and roX2 non-coding RNAs.</text>
</comment>
<comment type="domain">
    <text evidence="1">The chromo domain specifically recognizes and binds histone H3 trimethylated at 'Lys-36' (H3K36me3). The chromo domain also mediates association with roX1 and roX2 non-coding RNAs, promoting recruitment to the male X chromosome.</text>
</comment>
<comment type="PTM">
    <text evidence="1">Ubiquitinated by msl-2.</text>
</comment>